<dbReference type="EC" id="4.1.2.4" evidence="1"/>
<dbReference type="EMBL" id="AE016827">
    <property type="protein sequence ID" value="AAU36759.1"/>
    <property type="molecule type" value="Genomic_DNA"/>
</dbReference>
<dbReference type="RefSeq" id="WP_011199335.1">
    <property type="nucleotide sequence ID" value="NC_006300.1"/>
</dbReference>
<dbReference type="SMR" id="Q65WA1"/>
<dbReference type="STRING" id="221988.MS0152"/>
<dbReference type="KEGG" id="msu:MS0152"/>
<dbReference type="eggNOG" id="COG0274">
    <property type="taxonomic scope" value="Bacteria"/>
</dbReference>
<dbReference type="HOGENOM" id="CLU_053595_0_1_6"/>
<dbReference type="OrthoDB" id="6579831at2"/>
<dbReference type="UniPathway" id="UPA00002">
    <property type="reaction ID" value="UER00468"/>
</dbReference>
<dbReference type="Proteomes" id="UP000000607">
    <property type="component" value="Chromosome"/>
</dbReference>
<dbReference type="GO" id="GO:0005737">
    <property type="term" value="C:cytoplasm"/>
    <property type="evidence" value="ECO:0007669"/>
    <property type="project" value="UniProtKB-SubCell"/>
</dbReference>
<dbReference type="GO" id="GO:0004139">
    <property type="term" value="F:deoxyribose-phosphate aldolase activity"/>
    <property type="evidence" value="ECO:0007669"/>
    <property type="project" value="UniProtKB-UniRule"/>
</dbReference>
<dbReference type="GO" id="GO:0006018">
    <property type="term" value="P:2-deoxyribose 1-phosphate catabolic process"/>
    <property type="evidence" value="ECO:0007669"/>
    <property type="project" value="UniProtKB-UniRule"/>
</dbReference>
<dbReference type="GO" id="GO:0016052">
    <property type="term" value="P:carbohydrate catabolic process"/>
    <property type="evidence" value="ECO:0007669"/>
    <property type="project" value="TreeGrafter"/>
</dbReference>
<dbReference type="GO" id="GO:0009264">
    <property type="term" value="P:deoxyribonucleotide catabolic process"/>
    <property type="evidence" value="ECO:0007669"/>
    <property type="project" value="InterPro"/>
</dbReference>
<dbReference type="CDD" id="cd00959">
    <property type="entry name" value="DeoC"/>
    <property type="match status" value="1"/>
</dbReference>
<dbReference type="FunFam" id="3.20.20.70:FF:000044">
    <property type="entry name" value="Deoxyribose-phosphate aldolase"/>
    <property type="match status" value="1"/>
</dbReference>
<dbReference type="Gene3D" id="3.20.20.70">
    <property type="entry name" value="Aldolase class I"/>
    <property type="match status" value="1"/>
</dbReference>
<dbReference type="HAMAP" id="MF_00114">
    <property type="entry name" value="DeoC_type1"/>
    <property type="match status" value="1"/>
</dbReference>
<dbReference type="InterPro" id="IPR013785">
    <property type="entry name" value="Aldolase_TIM"/>
</dbReference>
<dbReference type="InterPro" id="IPR011343">
    <property type="entry name" value="DeoC"/>
</dbReference>
<dbReference type="InterPro" id="IPR002915">
    <property type="entry name" value="DeoC/FbaB/LacD_aldolase"/>
</dbReference>
<dbReference type="InterPro" id="IPR028581">
    <property type="entry name" value="DeoC_typeI"/>
</dbReference>
<dbReference type="NCBIfam" id="TIGR00126">
    <property type="entry name" value="deoC"/>
    <property type="match status" value="1"/>
</dbReference>
<dbReference type="PANTHER" id="PTHR10889">
    <property type="entry name" value="DEOXYRIBOSE-PHOSPHATE ALDOLASE"/>
    <property type="match status" value="1"/>
</dbReference>
<dbReference type="PANTHER" id="PTHR10889:SF1">
    <property type="entry name" value="DEOXYRIBOSE-PHOSPHATE ALDOLASE"/>
    <property type="match status" value="1"/>
</dbReference>
<dbReference type="Pfam" id="PF01791">
    <property type="entry name" value="DeoC"/>
    <property type="match status" value="1"/>
</dbReference>
<dbReference type="PIRSF" id="PIRSF001357">
    <property type="entry name" value="DeoC"/>
    <property type="match status" value="1"/>
</dbReference>
<dbReference type="SMART" id="SM01133">
    <property type="entry name" value="DeoC"/>
    <property type="match status" value="1"/>
</dbReference>
<dbReference type="SUPFAM" id="SSF51569">
    <property type="entry name" value="Aldolase"/>
    <property type="match status" value="1"/>
</dbReference>
<feature type="chain" id="PRO_0000231546" description="Deoxyribose-phosphate aldolase">
    <location>
        <begin position="1"/>
        <end position="224"/>
    </location>
</feature>
<feature type="active site" description="Proton donor/acceptor" evidence="1">
    <location>
        <position position="92"/>
    </location>
</feature>
<feature type="active site" description="Schiff-base intermediate with acetaldehyde" evidence="1">
    <location>
        <position position="154"/>
    </location>
</feature>
<feature type="active site" description="Proton donor/acceptor" evidence="1">
    <location>
        <position position="183"/>
    </location>
</feature>
<keyword id="KW-0963">Cytoplasm</keyword>
<keyword id="KW-0456">Lyase</keyword>
<keyword id="KW-0704">Schiff base</keyword>
<reference key="1">
    <citation type="journal article" date="2004" name="Nat. Biotechnol.">
        <title>The genome sequence of the capnophilic rumen bacterium Mannheimia succiniciproducens.</title>
        <authorList>
            <person name="Hong S.H."/>
            <person name="Kim J.S."/>
            <person name="Lee S.Y."/>
            <person name="In Y.H."/>
            <person name="Choi S.S."/>
            <person name="Rih J.-K."/>
            <person name="Kim C.H."/>
            <person name="Jeong H."/>
            <person name="Hur C.G."/>
            <person name="Kim J.J."/>
        </authorList>
    </citation>
    <scope>NUCLEOTIDE SEQUENCE [LARGE SCALE GENOMIC DNA]</scope>
    <source>
        <strain>KCTC 0769BP / MBEL55E</strain>
    </source>
</reference>
<proteinExistence type="inferred from homology"/>
<evidence type="ECO:0000255" key="1">
    <source>
        <dbReference type="HAMAP-Rule" id="MF_00114"/>
    </source>
</evidence>
<organism>
    <name type="scientific">Mannheimia succiniciproducens (strain KCTC 0769BP / MBEL55E)</name>
    <dbReference type="NCBI Taxonomy" id="221988"/>
    <lineage>
        <taxon>Bacteria</taxon>
        <taxon>Pseudomonadati</taxon>
        <taxon>Pseudomonadota</taxon>
        <taxon>Gammaproteobacteria</taxon>
        <taxon>Pasteurellales</taxon>
        <taxon>Pasteurellaceae</taxon>
        <taxon>Basfia</taxon>
    </lineage>
</organism>
<sequence length="224" mass="23932">MHPQELAKFIDHTALTAEKTAQDIIKLCDEAIENQFWSVCINPCYIPLAKEKLAATNVKICTVIGFPLGANLTSVKAFEAQESIKAGAQEIDMVINVGWIKSGEWDKVRSDIQAVLQACNGTLLKVILETCLLTPDEIVKACEICRDLKVGFVKTSTGFNKDGATVEDVALMRQTVGDKLGVKASGGIRDTETAMAMINAGATRIGASAGIAIIKGLQDNSGGY</sequence>
<gene>
    <name evidence="1" type="primary">deoC</name>
    <name type="ordered locus">MS0152</name>
</gene>
<name>DEOC_MANSM</name>
<comment type="function">
    <text evidence="1">Catalyzes a reversible aldol reaction between acetaldehyde and D-glyceraldehyde 3-phosphate to generate 2-deoxy-D-ribose 5-phosphate.</text>
</comment>
<comment type="catalytic activity">
    <reaction evidence="1">
        <text>2-deoxy-D-ribose 5-phosphate = D-glyceraldehyde 3-phosphate + acetaldehyde</text>
        <dbReference type="Rhea" id="RHEA:12821"/>
        <dbReference type="ChEBI" id="CHEBI:15343"/>
        <dbReference type="ChEBI" id="CHEBI:59776"/>
        <dbReference type="ChEBI" id="CHEBI:62877"/>
        <dbReference type="EC" id="4.1.2.4"/>
    </reaction>
</comment>
<comment type="pathway">
    <text evidence="1">Carbohydrate degradation; 2-deoxy-D-ribose 1-phosphate degradation; D-glyceraldehyde 3-phosphate and acetaldehyde from 2-deoxy-alpha-D-ribose 1-phosphate: step 2/2.</text>
</comment>
<comment type="subcellular location">
    <subcellularLocation>
        <location evidence="1">Cytoplasm</location>
    </subcellularLocation>
</comment>
<comment type="similarity">
    <text evidence="1">Belongs to the DeoC/FbaB aldolase family. DeoC type 1 subfamily.</text>
</comment>
<accession>Q65WA1</accession>
<protein>
    <recommendedName>
        <fullName evidence="1">Deoxyribose-phosphate aldolase</fullName>
        <shortName evidence="1">DERA</shortName>
        <ecNumber evidence="1">4.1.2.4</ecNumber>
    </recommendedName>
    <alternativeName>
        <fullName evidence="1">2-deoxy-D-ribose 5-phosphate aldolase</fullName>
    </alternativeName>
    <alternativeName>
        <fullName evidence="1">Phosphodeoxyriboaldolase</fullName>
        <shortName evidence="1">Deoxyriboaldolase</shortName>
    </alternativeName>
</protein>